<dbReference type="EMBL" id="CP000253">
    <property type="protein sequence ID" value="ABD29515.1"/>
    <property type="molecule type" value="Genomic_DNA"/>
</dbReference>
<dbReference type="RefSeq" id="WP_001261460.1">
    <property type="nucleotide sequence ID" value="NZ_LS483365.1"/>
</dbReference>
<dbReference type="RefSeq" id="YP_498937.1">
    <property type="nucleotide sequence ID" value="NC_007795.1"/>
</dbReference>
<dbReference type="PDB" id="5LI0">
    <property type="method" value="EM"/>
    <property type="resolution" value="3.80 A"/>
    <property type="chains" value="f=1-96"/>
</dbReference>
<dbReference type="PDB" id="5ND8">
    <property type="method" value="EM"/>
    <property type="resolution" value="3.70 A"/>
    <property type="chains" value="f=1-98"/>
</dbReference>
<dbReference type="PDB" id="5ND9">
    <property type="method" value="EM"/>
    <property type="resolution" value="3.70 A"/>
    <property type="chains" value="f=1-98"/>
</dbReference>
<dbReference type="PDB" id="5TCU">
    <property type="method" value="EM"/>
    <property type="resolution" value="3.90 A"/>
    <property type="chains" value="SE=1-95"/>
</dbReference>
<dbReference type="PDB" id="6YEF">
    <property type="method" value="EM"/>
    <property type="resolution" value="3.20 A"/>
    <property type="chains" value="f=1-98"/>
</dbReference>
<dbReference type="PDB" id="7BGD">
    <property type="method" value="EM"/>
    <property type="resolution" value="3.20 A"/>
    <property type="chains" value="f=1-98"/>
</dbReference>
<dbReference type="PDB" id="7KWG">
    <property type="method" value="EM"/>
    <property type="resolution" value="3.75 A"/>
    <property type="chains" value="f=1-98"/>
</dbReference>
<dbReference type="PDB" id="7NHL">
    <property type="method" value="EM"/>
    <property type="resolution" value="3.10 A"/>
    <property type="chains" value="g=1-98"/>
</dbReference>
<dbReference type="PDB" id="7NHM">
    <property type="method" value="EM"/>
    <property type="resolution" value="3.10 A"/>
    <property type="chains" value="g=1-98"/>
</dbReference>
<dbReference type="PDB" id="8BH6">
    <property type="method" value="EM"/>
    <property type="resolution" value="3.70 A"/>
    <property type="chains" value="f=1-98"/>
</dbReference>
<dbReference type="PDB" id="8BH7">
    <property type="method" value="EM"/>
    <property type="resolution" value="4.23 A"/>
    <property type="chains" value="f=1-98"/>
</dbReference>
<dbReference type="PDB" id="8BYV">
    <property type="method" value="EM"/>
    <property type="resolution" value="2.89 A"/>
    <property type="chains" value="f=1-98"/>
</dbReference>
<dbReference type="PDB" id="8P2F">
    <property type="method" value="EM"/>
    <property type="resolution" value="2.44 A"/>
    <property type="chains" value="g=1-98"/>
</dbReference>
<dbReference type="PDB" id="8P2G">
    <property type="method" value="EM"/>
    <property type="resolution" value="2.02 A"/>
    <property type="chains" value="g=1-98"/>
</dbReference>
<dbReference type="PDB" id="8P2H">
    <property type="method" value="EM"/>
    <property type="resolution" value="2.49 A"/>
    <property type="chains" value="g=1-98"/>
</dbReference>
<dbReference type="PDBsum" id="5LI0"/>
<dbReference type="PDBsum" id="5ND8"/>
<dbReference type="PDBsum" id="5ND9"/>
<dbReference type="PDBsum" id="5TCU"/>
<dbReference type="PDBsum" id="6YEF"/>
<dbReference type="PDBsum" id="7BGD"/>
<dbReference type="PDBsum" id="7KWG"/>
<dbReference type="PDBsum" id="7NHL"/>
<dbReference type="PDBsum" id="7NHM"/>
<dbReference type="PDBsum" id="8BH6"/>
<dbReference type="PDBsum" id="8BH7"/>
<dbReference type="PDBsum" id="8BYV"/>
<dbReference type="PDBsum" id="8P2F"/>
<dbReference type="PDBsum" id="8P2G"/>
<dbReference type="PDBsum" id="8P2H"/>
<dbReference type="EMDB" id="EMD-10791"/>
<dbReference type="EMDB" id="EMD-12178"/>
<dbReference type="EMDB" id="EMD-12332"/>
<dbReference type="EMDB" id="EMD-12333"/>
<dbReference type="EMDB" id="EMD-16048"/>
<dbReference type="EMDB" id="EMD-16049"/>
<dbReference type="EMDB" id="EMD-16334"/>
<dbReference type="EMDB" id="EMD-17363"/>
<dbReference type="EMDB" id="EMD-17364"/>
<dbReference type="EMDB" id="EMD-17365"/>
<dbReference type="EMDB" id="EMD-23052"/>
<dbReference type="EMDB" id="EMD-3624"/>
<dbReference type="EMDB" id="EMD-3625"/>
<dbReference type="EMDB" id="EMD-4050"/>
<dbReference type="EMDB" id="EMD-8402"/>
<dbReference type="SMR" id="Q2G113"/>
<dbReference type="IntAct" id="Q2G113">
    <property type="interactions" value="1"/>
</dbReference>
<dbReference type="STRING" id="93061.SAOUHSC_00348"/>
<dbReference type="PaxDb" id="1280-SAXN108_0415"/>
<dbReference type="GeneID" id="3921821"/>
<dbReference type="GeneID" id="98344691"/>
<dbReference type="KEGG" id="sao:SAOUHSC_00348"/>
<dbReference type="PATRIC" id="fig|93061.5.peg.318"/>
<dbReference type="eggNOG" id="COG0360">
    <property type="taxonomic scope" value="Bacteria"/>
</dbReference>
<dbReference type="HOGENOM" id="CLU_113441_5_3_9"/>
<dbReference type="OrthoDB" id="9812702at2"/>
<dbReference type="PRO" id="PR:Q2G113"/>
<dbReference type="Proteomes" id="UP000008816">
    <property type="component" value="Chromosome"/>
</dbReference>
<dbReference type="GO" id="GO:0005737">
    <property type="term" value="C:cytoplasm"/>
    <property type="evidence" value="ECO:0007669"/>
    <property type="project" value="UniProtKB-ARBA"/>
</dbReference>
<dbReference type="GO" id="GO:1990904">
    <property type="term" value="C:ribonucleoprotein complex"/>
    <property type="evidence" value="ECO:0007669"/>
    <property type="project" value="UniProtKB-KW"/>
</dbReference>
<dbReference type="GO" id="GO:0005840">
    <property type="term" value="C:ribosome"/>
    <property type="evidence" value="ECO:0007669"/>
    <property type="project" value="UniProtKB-KW"/>
</dbReference>
<dbReference type="GO" id="GO:0070181">
    <property type="term" value="F:small ribosomal subunit rRNA binding"/>
    <property type="evidence" value="ECO:0000318"/>
    <property type="project" value="GO_Central"/>
</dbReference>
<dbReference type="GO" id="GO:0003735">
    <property type="term" value="F:structural constituent of ribosome"/>
    <property type="evidence" value="ECO:0000318"/>
    <property type="project" value="GO_Central"/>
</dbReference>
<dbReference type="GO" id="GO:0006412">
    <property type="term" value="P:translation"/>
    <property type="evidence" value="ECO:0007669"/>
    <property type="project" value="UniProtKB-UniRule"/>
</dbReference>
<dbReference type="CDD" id="cd00473">
    <property type="entry name" value="bS6"/>
    <property type="match status" value="1"/>
</dbReference>
<dbReference type="FunFam" id="3.30.70.60:FF:000002">
    <property type="entry name" value="30S ribosomal protein S6"/>
    <property type="match status" value="1"/>
</dbReference>
<dbReference type="Gene3D" id="3.30.70.60">
    <property type="match status" value="1"/>
</dbReference>
<dbReference type="HAMAP" id="MF_00360">
    <property type="entry name" value="Ribosomal_bS6"/>
    <property type="match status" value="1"/>
</dbReference>
<dbReference type="InterPro" id="IPR000529">
    <property type="entry name" value="Ribosomal_bS6"/>
</dbReference>
<dbReference type="InterPro" id="IPR020815">
    <property type="entry name" value="Ribosomal_bS6_CS"/>
</dbReference>
<dbReference type="InterPro" id="IPR035980">
    <property type="entry name" value="Ribosomal_bS6_sf"/>
</dbReference>
<dbReference type="InterPro" id="IPR020814">
    <property type="entry name" value="Ribosomal_S6_plastid/chlpt"/>
</dbReference>
<dbReference type="InterPro" id="IPR014717">
    <property type="entry name" value="Transl_elong_EF1B/ribsomal_bS6"/>
</dbReference>
<dbReference type="NCBIfam" id="TIGR00166">
    <property type="entry name" value="S6"/>
    <property type="match status" value="1"/>
</dbReference>
<dbReference type="PANTHER" id="PTHR21011">
    <property type="entry name" value="MITOCHONDRIAL 28S RIBOSOMAL PROTEIN S6"/>
    <property type="match status" value="1"/>
</dbReference>
<dbReference type="PANTHER" id="PTHR21011:SF1">
    <property type="entry name" value="SMALL RIBOSOMAL SUBUNIT PROTEIN BS6M"/>
    <property type="match status" value="1"/>
</dbReference>
<dbReference type="Pfam" id="PF01250">
    <property type="entry name" value="Ribosomal_S6"/>
    <property type="match status" value="1"/>
</dbReference>
<dbReference type="SUPFAM" id="SSF54995">
    <property type="entry name" value="Ribosomal protein S6"/>
    <property type="match status" value="1"/>
</dbReference>
<dbReference type="PROSITE" id="PS01048">
    <property type="entry name" value="RIBOSOMAL_S6"/>
    <property type="match status" value="1"/>
</dbReference>
<sequence>MRTYEVMYIVRPNIEEDAKKALVERFNGILATEGAEVLEAKDWGKRRLAYEINDFKDGFYNIVRVKSDNNKATDEFQRLAKISDDIIRYMVIREDEDK</sequence>
<proteinExistence type="evidence at protein level"/>
<evidence type="ECO:0000255" key="1">
    <source>
        <dbReference type="HAMAP-Rule" id="MF_00360"/>
    </source>
</evidence>
<evidence type="ECO:0000305" key="2"/>
<evidence type="ECO:0007829" key="3">
    <source>
        <dbReference type="PDB" id="7BGD"/>
    </source>
</evidence>
<evidence type="ECO:0007829" key="4">
    <source>
        <dbReference type="PDB" id="8BYV"/>
    </source>
</evidence>
<gene>
    <name evidence="1" type="primary">rpsF</name>
    <name type="ordered locus">SAOUHSC_00348</name>
</gene>
<organism>
    <name type="scientific">Staphylococcus aureus (strain NCTC 8325 / PS 47)</name>
    <dbReference type="NCBI Taxonomy" id="93061"/>
    <lineage>
        <taxon>Bacteria</taxon>
        <taxon>Bacillati</taxon>
        <taxon>Bacillota</taxon>
        <taxon>Bacilli</taxon>
        <taxon>Bacillales</taxon>
        <taxon>Staphylococcaceae</taxon>
        <taxon>Staphylococcus</taxon>
    </lineage>
</organism>
<feature type="chain" id="PRO_1000005362" description="Small ribosomal subunit protein bS6">
    <location>
        <begin position="1"/>
        <end position="98"/>
    </location>
</feature>
<feature type="strand" evidence="4">
    <location>
        <begin position="2"/>
        <end position="10"/>
    </location>
</feature>
<feature type="helix" evidence="4">
    <location>
        <begin position="16"/>
        <end position="31"/>
    </location>
</feature>
<feature type="strand" evidence="3">
    <location>
        <begin position="32"/>
        <end position="34"/>
    </location>
</feature>
<feature type="strand" evidence="4">
    <location>
        <begin position="36"/>
        <end position="45"/>
    </location>
</feature>
<feature type="strand" evidence="4">
    <location>
        <begin position="52"/>
        <end position="54"/>
    </location>
</feature>
<feature type="strand" evidence="4">
    <location>
        <begin position="59"/>
        <end position="67"/>
    </location>
</feature>
<feature type="strand" evidence="3">
    <location>
        <begin position="68"/>
        <end position="70"/>
    </location>
</feature>
<feature type="helix" evidence="4">
    <location>
        <begin position="73"/>
        <end position="82"/>
    </location>
</feature>
<feature type="strand" evidence="4">
    <location>
        <begin position="86"/>
        <end position="91"/>
    </location>
</feature>
<protein>
    <recommendedName>
        <fullName evidence="1">Small ribosomal subunit protein bS6</fullName>
    </recommendedName>
    <alternativeName>
        <fullName evidence="2">30S ribosomal protein S6</fullName>
    </alternativeName>
</protein>
<name>RS6_STAA8</name>
<keyword id="KW-0002">3D-structure</keyword>
<keyword id="KW-1185">Reference proteome</keyword>
<keyword id="KW-0687">Ribonucleoprotein</keyword>
<keyword id="KW-0689">Ribosomal protein</keyword>
<keyword id="KW-0694">RNA-binding</keyword>
<keyword id="KW-0699">rRNA-binding</keyword>
<comment type="function">
    <text evidence="1">Binds together with bS18 to 16S ribosomal RNA.</text>
</comment>
<comment type="similarity">
    <text evidence="1">Belongs to the bacterial ribosomal protein bS6 family.</text>
</comment>
<accession>Q2G113</accession>
<reference key="1">
    <citation type="book" date="2006" name="Gram positive pathogens, 2nd edition">
        <title>The Staphylococcus aureus NCTC 8325 genome.</title>
        <editorList>
            <person name="Fischetti V."/>
            <person name="Novick R."/>
            <person name="Ferretti J."/>
            <person name="Portnoy D."/>
            <person name="Rood J."/>
        </editorList>
        <authorList>
            <person name="Gillaspy A.F."/>
            <person name="Worrell V."/>
            <person name="Orvis J."/>
            <person name="Roe B.A."/>
            <person name="Dyer D.W."/>
            <person name="Iandolo J.J."/>
        </authorList>
    </citation>
    <scope>NUCLEOTIDE SEQUENCE [LARGE SCALE GENOMIC DNA]</scope>
    <source>
        <strain>NCTC 8325 / PS 47</strain>
    </source>
</reference>